<gene>
    <name evidence="1" type="primary">guaA</name>
    <name type="ordered locus">Spro_3595</name>
</gene>
<protein>
    <recommendedName>
        <fullName evidence="1">GMP synthase [glutamine-hydrolyzing]</fullName>
        <ecNumber evidence="1">6.3.5.2</ecNumber>
    </recommendedName>
    <alternativeName>
        <fullName evidence="1">GMP synthetase</fullName>
    </alternativeName>
    <alternativeName>
        <fullName evidence="1">Glutamine amidotransferase</fullName>
    </alternativeName>
</protein>
<name>GUAA_SERP5</name>
<keyword id="KW-0067">ATP-binding</keyword>
<keyword id="KW-0315">Glutamine amidotransferase</keyword>
<keyword id="KW-0332">GMP biosynthesis</keyword>
<keyword id="KW-0436">Ligase</keyword>
<keyword id="KW-0547">Nucleotide-binding</keyword>
<keyword id="KW-0658">Purine biosynthesis</keyword>
<sequence>MTKNIHKHRILILDFGSQYTQLVARRVREIGVYCELWAWDVSEEQIREFNPSGIILSGGPESTTEANSPRAPEYVFTAGVPVLGVCYGMQTMAMQLGGQVEGSNEREFGYAQVEITTESALVRDIEDALSPAGKPLLDVWMSHGDKVTAIPADFVTVASTDTCPFAIMANEEKRFYGVQFHPEVTHTRQGQRMLERFVLDICQCEALWTPATIIEDAVERIRQQVGEDHVILGLSGGVDSSVTAMLLHRAIGKRLTCVFVDNGLLRLNEAEQVLEMFGDHFGLNIVHVAAEDRFLSALAGVDEPEAKRKIIGRVFVELFDEEACKQSEVKWLAQGTIYPDVIESAASATGKAHVIKSHHNVGGLPKEMKLGLVEPLKELFKDEVRKIGLELGLPYDMLFRHPFPGPGLGVRVLGEVKKEYCDLLRRADAIFIEELHKADLYNKVSQAFTVFLPVRSVGVMGDGRKYDWVVSLRAVETIDFMTAHWAHLPYDFLGRVSNRIINEVNGISRVVYDISGKPPATIEWE</sequence>
<dbReference type="EC" id="6.3.5.2" evidence="1"/>
<dbReference type="EMBL" id="CP000826">
    <property type="protein sequence ID" value="ABV42691.1"/>
    <property type="molecule type" value="Genomic_DNA"/>
</dbReference>
<dbReference type="SMR" id="A8GHV1"/>
<dbReference type="STRING" id="399741.Spro_3595"/>
<dbReference type="KEGG" id="spe:Spro_3595"/>
<dbReference type="eggNOG" id="COG0518">
    <property type="taxonomic scope" value="Bacteria"/>
</dbReference>
<dbReference type="eggNOG" id="COG0519">
    <property type="taxonomic scope" value="Bacteria"/>
</dbReference>
<dbReference type="HOGENOM" id="CLU_014340_0_5_6"/>
<dbReference type="OrthoDB" id="9802219at2"/>
<dbReference type="UniPathway" id="UPA00189">
    <property type="reaction ID" value="UER00296"/>
</dbReference>
<dbReference type="GO" id="GO:0005829">
    <property type="term" value="C:cytosol"/>
    <property type="evidence" value="ECO:0007669"/>
    <property type="project" value="TreeGrafter"/>
</dbReference>
<dbReference type="GO" id="GO:0005524">
    <property type="term" value="F:ATP binding"/>
    <property type="evidence" value="ECO:0007669"/>
    <property type="project" value="UniProtKB-UniRule"/>
</dbReference>
<dbReference type="GO" id="GO:0003921">
    <property type="term" value="F:GMP synthase activity"/>
    <property type="evidence" value="ECO:0007669"/>
    <property type="project" value="InterPro"/>
</dbReference>
<dbReference type="CDD" id="cd01742">
    <property type="entry name" value="GATase1_GMP_Synthase"/>
    <property type="match status" value="1"/>
</dbReference>
<dbReference type="CDD" id="cd01997">
    <property type="entry name" value="GMP_synthase_C"/>
    <property type="match status" value="1"/>
</dbReference>
<dbReference type="FunFam" id="3.30.300.10:FF:000002">
    <property type="entry name" value="GMP synthase [glutamine-hydrolyzing]"/>
    <property type="match status" value="1"/>
</dbReference>
<dbReference type="FunFam" id="3.40.50.620:FF:000001">
    <property type="entry name" value="GMP synthase [glutamine-hydrolyzing]"/>
    <property type="match status" value="1"/>
</dbReference>
<dbReference type="FunFam" id="3.40.50.880:FF:000001">
    <property type="entry name" value="GMP synthase [glutamine-hydrolyzing]"/>
    <property type="match status" value="1"/>
</dbReference>
<dbReference type="Gene3D" id="3.30.300.10">
    <property type="match status" value="1"/>
</dbReference>
<dbReference type="Gene3D" id="3.40.50.880">
    <property type="match status" value="1"/>
</dbReference>
<dbReference type="Gene3D" id="3.40.50.620">
    <property type="entry name" value="HUPs"/>
    <property type="match status" value="1"/>
</dbReference>
<dbReference type="HAMAP" id="MF_00344">
    <property type="entry name" value="GMP_synthase"/>
    <property type="match status" value="1"/>
</dbReference>
<dbReference type="InterPro" id="IPR029062">
    <property type="entry name" value="Class_I_gatase-like"/>
</dbReference>
<dbReference type="InterPro" id="IPR017926">
    <property type="entry name" value="GATASE"/>
</dbReference>
<dbReference type="InterPro" id="IPR001674">
    <property type="entry name" value="GMP_synth_C"/>
</dbReference>
<dbReference type="InterPro" id="IPR004739">
    <property type="entry name" value="GMP_synth_GATase"/>
</dbReference>
<dbReference type="InterPro" id="IPR022955">
    <property type="entry name" value="GMP_synthase"/>
</dbReference>
<dbReference type="InterPro" id="IPR025777">
    <property type="entry name" value="GMPS_ATP_PPase_dom"/>
</dbReference>
<dbReference type="InterPro" id="IPR022310">
    <property type="entry name" value="NAD/GMP_synthase"/>
</dbReference>
<dbReference type="InterPro" id="IPR014729">
    <property type="entry name" value="Rossmann-like_a/b/a_fold"/>
</dbReference>
<dbReference type="NCBIfam" id="TIGR00884">
    <property type="entry name" value="guaA_Cterm"/>
    <property type="match status" value="1"/>
</dbReference>
<dbReference type="NCBIfam" id="TIGR00888">
    <property type="entry name" value="guaA_Nterm"/>
    <property type="match status" value="1"/>
</dbReference>
<dbReference type="NCBIfam" id="NF000848">
    <property type="entry name" value="PRK00074.1"/>
    <property type="match status" value="1"/>
</dbReference>
<dbReference type="PANTHER" id="PTHR11922:SF2">
    <property type="entry name" value="GMP SYNTHASE [GLUTAMINE-HYDROLYZING]"/>
    <property type="match status" value="1"/>
</dbReference>
<dbReference type="PANTHER" id="PTHR11922">
    <property type="entry name" value="GMP SYNTHASE-RELATED"/>
    <property type="match status" value="1"/>
</dbReference>
<dbReference type="Pfam" id="PF00117">
    <property type="entry name" value="GATase"/>
    <property type="match status" value="1"/>
</dbReference>
<dbReference type="Pfam" id="PF00958">
    <property type="entry name" value="GMP_synt_C"/>
    <property type="match status" value="1"/>
</dbReference>
<dbReference type="Pfam" id="PF02540">
    <property type="entry name" value="NAD_synthase"/>
    <property type="match status" value="1"/>
</dbReference>
<dbReference type="PRINTS" id="PR00097">
    <property type="entry name" value="ANTSNTHASEII"/>
</dbReference>
<dbReference type="PRINTS" id="PR00099">
    <property type="entry name" value="CPSGATASE"/>
</dbReference>
<dbReference type="PRINTS" id="PR00096">
    <property type="entry name" value="GATASE"/>
</dbReference>
<dbReference type="SUPFAM" id="SSF52402">
    <property type="entry name" value="Adenine nucleotide alpha hydrolases-like"/>
    <property type="match status" value="1"/>
</dbReference>
<dbReference type="SUPFAM" id="SSF52317">
    <property type="entry name" value="Class I glutamine amidotransferase-like"/>
    <property type="match status" value="1"/>
</dbReference>
<dbReference type="SUPFAM" id="SSF54810">
    <property type="entry name" value="GMP synthetase C-terminal dimerisation domain"/>
    <property type="match status" value="1"/>
</dbReference>
<dbReference type="PROSITE" id="PS51273">
    <property type="entry name" value="GATASE_TYPE_1"/>
    <property type="match status" value="1"/>
</dbReference>
<dbReference type="PROSITE" id="PS51553">
    <property type="entry name" value="GMPS_ATP_PPASE"/>
    <property type="match status" value="1"/>
</dbReference>
<evidence type="ECO:0000255" key="1">
    <source>
        <dbReference type="HAMAP-Rule" id="MF_00344"/>
    </source>
</evidence>
<accession>A8GHV1</accession>
<organism>
    <name type="scientific">Serratia proteamaculans (strain 568)</name>
    <dbReference type="NCBI Taxonomy" id="399741"/>
    <lineage>
        <taxon>Bacteria</taxon>
        <taxon>Pseudomonadati</taxon>
        <taxon>Pseudomonadota</taxon>
        <taxon>Gammaproteobacteria</taxon>
        <taxon>Enterobacterales</taxon>
        <taxon>Yersiniaceae</taxon>
        <taxon>Serratia</taxon>
    </lineage>
</organism>
<reference key="1">
    <citation type="submission" date="2007-09" db="EMBL/GenBank/DDBJ databases">
        <title>Complete sequence of chromosome of Serratia proteamaculans 568.</title>
        <authorList>
            <consortium name="US DOE Joint Genome Institute"/>
            <person name="Copeland A."/>
            <person name="Lucas S."/>
            <person name="Lapidus A."/>
            <person name="Barry K."/>
            <person name="Glavina del Rio T."/>
            <person name="Dalin E."/>
            <person name="Tice H."/>
            <person name="Pitluck S."/>
            <person name="Chain P."/>
            <person name="Malfatti S."/>
            <person name="Shin M."/>
            <person name="Vergez L."/>
            <person name="Schmutz J."/>
            <person name="Larimer F."/>
            <person name="Land M."/>
            <person name="Hauser L."/>
            <person name="Kyrpides N."/>
            <person name="Kim E."/>
            <person name="Taghavi S."/>
            <person name="Newman L."/>
            <person name="Vangronsveld J."/>
            <person name="van der Lelie D."/>
            <person name="Richardson P."/>
        </authorList>
    </citation>
    <scope>NUCLEOTIDE SEQUENCE [LARGE SCALE GENOMIC DNA]</scope>
    <source>
        <strain>568</strain>
    </source>
</reference>
<feature type="chain" id="PRO_1000120396" description="GMP synthase [glutamine-hydrolyzing]">
    <location>
        <begin position="1"/>
        <end position="525"/>
    </location>
</feature>
<feature type="domain" description="Glutamine amidotransferase type-1" evidence="1">
    <location>
        <begin position="9"/>
        <end position="207"/>
    </location>
</feature>
<feature type="domain" description="GMPS ATP-PPase" evidence="1">
    <location>
        <begin position="208"/>
        <end position="400"/>
    </location>
</feature>
<feature type="active site" description="Nucleophile" evidence="1">
    <location>
        <position position="86"/>
    </location>
</feature>
<feature type="active site" evidence="1">
    <location>
        <position position="181"/>
    </location>
</feature>
<feature type="active site" evidence="1">
    <location>
        <position position="183"/>
    </location>
</feature>
<feature type="binding site" evidence="1">
    <location>
        <begin position="235"/>
        <end position="241"/>
    </location>
    <ligand>
        <name>ATP</name>
        <dbReference type="ChEBI" id="CHEBI:30616"/>
    </ligand>
</feature>
<proteinExistence type="inferred from homology"/>
<comment type="function">
    <text evidence="1">Catalyzes the synthesis of GMP from XMP.</text>
</comment>
<comment type="catalytic activity">
    <reaction evidence="1">
        <text>XMP + L-glutamine + ATP + H2O = GMP + L-glutamate + AMP + diphosphate + 2 H(+)</text>
        <dbReference type="Rhea" id="RHEA:11680"/>
        <dbReference type="ChEBI" id="CHEBI:15377"/>
        <dbReference type="ChEBI" id="CHEBI:15378"/>
        <dbReference type="ChEBI" id="CHEBI:29985"/>
        <dbReference type="ChEBI" id="CHEBI:30616"/>
        <dbReference type="ChEBI" id="CHEBI:33019"/>
        <dbReference type="ChEBI" id="CHEBI:57464"/>
        <dbReference type="ChEBI" id="CHEBI:58115"/>
        <dbReference type="ChEBI" id="CHEBI:58359"/>
        <dbReference type="ChEBI" id="CHEBI:456215"/>
        <dbReference type="EC" id="6.3.5.2"/>
    </reaction>
</comment>
<comment type="pathway">
    <text evidence="1">Purine metabolism; GMP biosynthesis; GMP from XMP (L-Gln route): step 1/1.</text>
</comment>
<comment type="subunit">
    <text evidence="1">Homodimer.</text>
</comment>